<feature type="chain" id="PRO_1000115325" description="Chorismate synthase">
    <location>
        <begin position="1"/>
        <end position="365"/>
    </location>
</feature>
<feature type="binding site" evidence="1">
    <location>
        <position position="48"/>
    </location>
    <ligand>
        <name>NADP(+)</name>
        <dbReference type="ChEBI" id="CHEBI:58349"/>
    </ligand>
</feature>
<feature type="binding site" evidence="1">
    <location>
        <position position="54"/>
    </location>
    <ligand>
        <name>NADP(+)</name>
        <dbReference type="ChEBI" id="CHEBI:58349"/>
    </ligand>
</feature>
<feature type="binding site" evidence="1">
    <location>
        <begin position="125"/>
        <end position="127"/>
    </location>
    <ligand>
        <name>FMN</name>
        <dbReference type="ChEBI" id="CHEBI:58210"/>
    </ligand>
</feature>
<feature type="binding site" evidence="1">
    <location>
        <begin position="238"/>
        <end position="239"/>
    </location>
    <ligand>
        <name>FMN</name>
        <dbReference type="ChEBI" id="CHEBI:58210"/>
    </ligand>
</feature>
<feature type="binding site" evidence="1">
    <location>
        <position position="278"/>
    </location>
    <ligand>
        <name>FMN</name>
        <dbReference type="ChEBI" id="CHEBI:58210"/>
    </ligand>
</feature>
<feature type="binding site" evidence="1">
    <location>
        <begin position="293"/>
        <end position="297"/>
    </location>
    <ligand>
        <name>FMN</name>
        <dbReference type="ChEBI" id="CHEBI:58210"/>
    </ligand>
</feature>
<feature type="binding site" evidence="1">
    <location>
        <position position="319"/>
    </location>
    <ligand>
        <name>FMN</name>
        <dbReference type="ChEBI" id="CHEBI:58210"/>
    </ligand>
</feature>
<evidence type="ECO:0000255" key="1">
    <source>
        <dbReference type="HAMAP-Rule" id="MF_00300"/>
    </source>
</evidence>
<proteinExistence type="inferred from homology"/>
<accession>B4RU03</accession>
<accession>F2G4Z4</accession>
<sequence length="365" mass="39174">MSGNSFGKLFTVTTFGESHGIAIGGVVDGCPPGLEITEEDLQVDLDRRKPGTSRYTTARREDDEVQILSGVFEGKTTGTSIGLLIKNKDQRSQDYGNIKDRFRPGHADYTYDQKYGSRDYRGGGRSSARETAIRVAAGGIAKKYLKEVHGIEVLGYLSQLGPVTVDKVDHSVTNTNPFFCPDESKLDALDEYMRDLKKSGDSIGAKVSVVAKNVPVGLGEPVFDRLDAEIAHAMMGINAVKGVEIGDGFDVINQKGSEHRDTLTPEGFSSNHAGGVLGGISTGQDIEVHMALKPTSSISVPGKTINKDNEEIDIVTKGRHDPCVGIRAVPIAEAMLALVLMDHLLRHRAQNTGVLSTTKPIAGQA</sequence>
<name>AROC_ALTMD</name>
<gene>
    <name evidence="1" type="primary">aroC</name>
    <name type="ordered locus">MADE_1006530</name>
</gene>
<reference key="1">
    <citation type="journal article" date="2008" name="ISME J.">
        <title>Comparative genomics of two ecotypes of the marine planktonic copiotroph Alteromonas macleodii suggests alternative lifestyles associated with different kinds of particulate organic matter.</title>
        <authorList>
            <person name="Ivars-Martinez E."/>
            <person name="Martin-Cuadrado A.-B."/>
            <person name="D'Auria G."/>
            <person name="Mira A."/>
            <person name="Ferriera S."/>
            <person name="Johnson J."/>
            <person name="Friedman R."/>
            <person name="Rodriguez-Valera F."/>
        </authorList>
    </citation>
    <scope>NUCLEOTIDE SEQUENCE [LARGE SCALE GENOMIC DNA]</scope>
    <source>
        <strain>DSM 17117 / CIP 110805 / LMG 28347 / Deep ecotype</strain>
    </source>
</reference>
<protein>
    <recommendedName>
        <fullName evidence="1">Chorismate synthase</fullName>
        <shortName evidence="1">CS</shortName>
        <ecNumber evidence="1">4.2.3.5</ecNumber>
    </recommendedName>
    <alternativeName>
        <fullName evidence="1">5-enolpyruvylshikimate-3-phosphate phospholyase</fullName>
    </alternativeName>
</protein>
<comment type="function">
    <text evidence="1">Catalyzes the anti-1,4-elimination of the C-3 phosphate and the C-6 proR hydrogen from 5-enolpyruvylshikimate-3-phosphate (EPSP) to yield chorismate, which is the branch point compound that serves as the starting substrate for the three terminal pathways of aromatic amino acid biosynthesis. This reaction introduces a second double bond into the aromatic ring system.</text>
</comment>
<comment type="catalytic activity">
    <reaction evidence="1">
        <text>5-O-(1-carboxyvinyl)-3-phosphoshikimate = chorismate + phosphate</text>
        <dbReference type="Rhea" id="RHEA:21020"/>
        <dbReference type="ChEBI" id="CHEBI:29748"/>
        <dbReference type="ChEBI" id="CHEBI:43474"/>
        <dbReference type="ChEBI" id="CHEBI:57701"/>
        <dbReference type="EC" id="4.2.3.5"/>
    </reaction>
</comment>
<comment type="cofactor">
    <cofactor evidence="1">
        <name>FMNH2</name>
        <dbReference type="ChEBI" id="CHEBI:57618"/>
    </cofactor>
    <text evidence="1">Reduced FMN (FMNH(2)).</text>
</comment>
<comment type="pathway">
    <text evidence="1">Metabolic intermediate biosynthesis; chorismate biosynthesis; chorismate from D-erythrose 4-phosphate and phosphoenolpyruvate: step 7/7.</text>
</comment>
<comment type="subunit">
    <text evidence="1">Homotetramer.</text>
</comment>
<comment type="similarity">
    <text evidence="1">Belongs to the chorismate synthase family.</text>
</comment>
<organism>
    <name type="scientific">Alteromonas mediterranea (strain DSM 17117 / CIP 110805 / LMG 28347 / Deep ecotype)</name>
    <dbReference type="NCBI Taxonomy" id="1774373"/>
    <lineage>
        <taxon>Bacteria</taxon>
        <taxon>Pseudomonadati</taxon>
        <taxon>Pseudomonadota</taxon>
        <taxon>Gammaproteobacteria</taxon>
        <taxon>Alteromonadales</taxon>
        <taxon>Alteromonadaceae</taxon>
        <taxon>Alteromonas/Salinimonas group</taxon>
        <taxon>Alteromonas</taxon>
    </lineage>
</organism>
<dbReference type="EC" id="4.2.3.5" evidence="1"/>
<dbReference type="EMBL" id="CP001103">
    <property type="protein sequence ID" value="AEA97448.1"/>
    <property type="molecule type" value="Genomic_DNA"/>
</dbReference>
<dbReference type="RefSeq" id="WP_012517790.1">
    <property type="nucleotide sequence ID" value="NC_011138.3"/>
</dbReference>
<dbReference type="SMR" id="B4RU03"/>
<dbReference type="KEGG" id="amc:MADE_1006530"/>
<dbReference type="HOGENOM" id="CLU_034547_0_2_6"/>
<dbReference type="UniPathway" id="UPA00053">
    <property type="reaction ID" value="UER00090"/>
</dbReference>
<dbReference type="Proteomes" id="UP000001870">
    <property type="component" value="Chromosome"/>
</dbReference>
<dbReference type="GO" id="GO:0005829">
    <property type="term" value="C:cytosol"/>
    <property type="evidence" value="ECO:0007669"/>
    <property type="project" value="TreeGrafter"/>
</dbReference>
<dbReference type="GO" id="GO:0004107">
    <property type="term" value="F:chorismate synthase activity"/>
    <property type="evidence" value="ECO:0007669"/>
    <property type="project" value="UniProtKB-UniRule"/>
</dbReference>
<dbReference type="GO" id="GO:0010181">
    <property type="term" value="F:FMN binding"/>
    <property type="evidence" value="ECO:0007669"/>
    <property type="project" value="TreeGrafter"/>
</dbReference>
<dbReference type="GO" id="GO:0008652">
    <property type="term" value="P:amino acid biosynthetic process"/>
    <property type="evidence" value="ECO:0007669"/>
    <property type="project" value="UniProtKB-KW"/>
</dbReference>
<dbReference type="GO" id="GO:0009073">
    <property type="term" value="P:aromatic amino acid family biosynthetic process"/>
    <property type="evidence" value="ECO:0007669"/>
    <property type="project" value="UniProtKB-KW"/>
</dbReference>
<dbReference type="GO" id="GO:0009423">
    <property type="term" value="P:chorismate biosynthetic process"/>
    <property type="evidence" value="ECO:0007669"/>
    <property type="project" value="UniProtKB-UniRule"/>
</dbReference>
<dbReference type="CDD" id="cd07304">
    <property type="entry name" value="Chorismate_synthase"/>
    <property type="match status" value="1"/>
</dbReference>
<dbReference type="FunFam" id="3.60.150.10:FF:000001">
    <property type="entry name" value="Chorismate synthase"/>
    <property type="match status" value="1"/>
</dbReference>
<dbReference type="Gene3D" id="3.60.150.10">
    <property type="entry name" value="Chorismate synthase AroC"/>
    <property type="match status" value="1"/>
</dbReference>
<dbReference type="HAMAP" id="MF_00300">
    <property type="entry name" value="Chorismate_synth"/>
    <property type="match status" value="1"/>
</dbReference>
<dbReference type="InterPro" id="IPR000453">
    <property type="entry name" value="Chorismate_synth"/>
</dbReference>
<dbReference type="InterPro" id="IPR035904">
    <property type="entry name" value="Chorismate_synth_AroC_sf"/>
</dbReference>
<dbReference type="InterPro" id="IPR020541">
    <property type="entry name" value="Chorismate_synthase_CS"/>
</dbReference>
<dbReference type="NCBIfam" id="TIGR00033">
    <property type="entry name" value="aroC"/>
    <property type="match status" value="1"/>
</dbReference>
<dbReference type="NCBIfam" id="NF003793">
    <property type="entry name" value="PRK05382.1"/>
    <property type="match status" value="1"/>
</dbReference>
<dbReference type="PANTHER" id="PTHR21085">
    <property type="entry name" value="CHORISMATE SYNTHASE"/>
    <property type="match status" value="1"/>
</dbReference>
<dbReference type="PANTHER" id="PTHR21085:SF0">
    <property type="entry name" value="CHORISMATE SYNTHASE"/>
    <property type="match status" value="1"/>
</dbReference>
<dbReference type="Pfam" id="PF01264">
    <property type="entry name" value="Chorismate_synt"/>
    <property type="match status" value="1"/>
</dbReference>
<dbReference type="PIRSF" id="PIRSF001456">
    <property type="entry name" value="Chorismate_synth"/>
    <property type="match status" value="1"/>
</dbReference>
<dbReference type="SUPFAM" id="SSF103263">
    <property type="entry name" value="Chorismate synthase, AroC"/>
    <property type="match status" value="1"/>
</dbReference>
<dbReference type="PROSITE" id="PS00787">
    <property type="entry name" value="CHORISMATE_SYNTHASE_1"/>
    <property type="match status" value="1"/>
</dbReference>
<dbReference type="PROSITE" id="PS00789">
    <property type="entry name" value="CHORISMATE_SYNTHASE_3"/>
    <property type="match status" value="1"/>
</dbReference>
<keyword id="KW-0028">Amino-acid biosynthesis</keyword>
<keyword id="KW-0057">Aromatic amino acid biosynthesis</keyword>
<keyword id="KW-0274">FAD</keyword>
<keyword id="KW-0285">Flavoprotein</keyword>
<keyword id="KW-0288">FMN</keyword>
<keyword id="KW-0456">Lyase</keyword>
<keyword id="KW-0521">NADP</keyword>